<comment type="function">
    <text evidence="1">Catalyzes the hydrolysis of the adenine ring of phosphoribosyl-AMP.</text>
</comment>
<comment type="catalytic activity">
    <reaction evidence="1">
        <text>1-(5-phospho-beta-D-ribosyl)-5'-AMP + H2O = 1-(5-phospho-beta-D-ribosyl)-5-[(5-phospho-beta-D-ribosylamino)methylideneamino]imidazole-4-carboxamide</text>
        <dbReference type="Rhea" id="RHEA:20049"/>
        <dbReference type="ChEBI" id="CHEBI:15377"/>
        <dbReference type="ChEBI" id="CHEBI:58435"/>
        <dbReference type="ChEBI" id="CHEBI:59457"/>
        <dbReference type="EC" id="3.5.4.19"/>
    </reaction>
</comment>
<comment type="cofactor">
    <cofactor evidence="1">
        <name>Mg(2+)</name>
        <dbReference type="ChEBI" id="CHEBI:18420"/>
    </cofactor>
    <text evidence="1">Binds 1 Mg(2+) ion per subunit.</text>
</comment>
<comment type="cofactor">
    <cofactor evidence="1">
        <name>Zn(2+)</name>
        <dbReference type="ChEBI" id="CHEBI:29105"/>
    </cofactor>
    <text evidence="1">Binds 1 zinc ion per subunit.</text>
</comment>
<comment type="pathway">
    <text evidence="1">Amino-acid biosynthesis; L-histidine biosynthesis; L-histidine from 5-phospho-alpha-D-ribose 1-diphosphate: step 3/9.</text>
</comment>
<comment type="subunit">
    <text evidence="1">Homodimer.</text>
</comment>
<comment type="subcellular location">
    <subcellularLocation>
        <location evidence="1">Cytoplasm</location>
    </subcellularLocation>
</comment>
<comment type="similarity">
    <text evidence="1">Belongs to the PRA-CH family.</text>
</comment>
<evidence type="ECO:0000255" key="1">
    <source>
        <dbReference type="HAMAP-Rule" id="MF_01021"/>
    </source>
</evidence>
<protein>
    <recommendedName>
        <fullName evidence="1">Phosphoribosyl-AMP cyclohydrolase</fullName>
        <shortName evidence="1">PRA-CH</shortName>
        <ecNumber evidence="1">3.5.4.19</ecNumber>
    </recommendedName>
</protein>
<reference key="1">
    <citation type="journal article" date="2006" name="J. Bacteriol.">
        <title>Pathogenomic sequence analysis of Bacillus cereus and Bacillus thuringiensis isolates closely related to Bacillus anthracis.</title>
        <authorList>
            <person name="Han C.S."/>
            <person name="Xie G."/>
            <person name="Challacombe J.F."/>
            <person name="Altherr M.R."/>
            <person name="Bhotika S.S."/>
            <person name="Bruce D."/>
            <person name="Campbell C.S."/>
            <person name="Campbell M.L."/>
            <person name="Chen J."/>
            <person name="Chertkov O."/>
            <person name="Cleland C."/>
            <person name="Dimitrijevic M."/>
            <person name="Doggett N.A."/>
            <person name="Fawcett J.J."/>
            <person name="Glavina T."/>
            <person name="Goodwin L.A."/>
            <person name="Hill K.K."/>
            <person name="Hitchcock P."/>
            <person name="Jackson P.J."/>
            <person name="Keim P."/>
            <person name="Kewalramani A.R."/>
            <person name="Longmire J."/>
            <person name="Lucas S."/>
            <person name="Malfatti S."/>
            <person name="McMurry K."/>
            <person name="Meincke L.J."/>
            <person name="Misra M."/>
            <person name="Moseman B.L."/>
            <person name="Mundt M."/>
            <person name="Munk A.C."/>
            <person name="Okinaka R.T."/>
            <person name="Parson-Quintana B."/>
            <person name="Reilly L.P."/>
            <person name="Richardson P."/>
            <person name="Robinson D.L."/>
            <person name="Rubin E."/>
            <person name="Saunders E."/>
            <person name="Tapia R."/>
            <person name="Tesmer J.G."/>
            <person name="Thayer N."/>
            <person name="Thompson L.S."/>
            <person name="Tice H."/>
            <person name="Ticknor L.O."/>
            <person name="Wills P.L."/>
            <person name="Brettin T.S."/>
            <person name="Gilna P."/>
        </authorList>
    </citation>
    <scope>NUCLEOTIDE SEQUENCE [LARGE SCALE GENOMIC DNA]</scope>
    <source>
        <strain>ZK / E33L</strain>
    </source>
</reference>
<gene>
    <name evidence="1" type="primary">hisI</name>
    <name type="ordered locus">BCE33L1296</name>
</gene>
<feature type="chain" id="PRO_0000229809" description="Phosphoribosyl-AMP cyclohydrolase">
    <location>
        <begin position="1"/>
        <end position="101"/>
    </location>
</feature>
<feature type="binding site" evidence="1">
    <location>
        <position position="71"/>
    </location>
    <ligand>
        <name>Mg(2+)</name>
        <dbReference type="ChEBI" id="CHEBI:18420"/>
    </ligand>
</feature>
<feature type="binding site" evidence="1">
    <location>
        <position position="72"/>
    </location>
    <ligand>
        <name>Zn(2+)</name>
        <dbReference type="ChEBI" id="CHEBI:29105"/>
        <note>ligand shared between dimeric partners</note>
    </ligand>
</feature>
<feature type="binding site" evidence="1">
    <location>
        <position position="73"/>
    </location>
    <ligand>
        <name>Mg(2+)</name>
        <dbReference type="ChEBI" id="CHEBI:18420"/>
    </ligand>
</feature>
<feature type="binding site" evidence="1">
    <location>
        <position position="75"/>
    </location>
    <ligand>
        <name>Mg(2+)</name>
        <dbReference type="ChEBI" id="CHEBI:18420"/>
    </ligand>
</feature>
<feature type="binding site" evidence="1">
    <location>
        <position position="88"/>
    </location>
    <ligand>
        <name>Zn(2+)</name>
        <dbReference type="ChEBI" id="CHEBI:29105"/>
        <note>ligand shared between dimeric partners</note>
    </ligand>
</feature>
<feature type="binding site" evidence="1">
    <location>
        <position position="95"/>
    </location>
    <ligand>
        <name>Zn(2+)</name>
        <dbReference type="ChEBI" id="CHEBI:29105"/>
        <note>ligand shared between dimeric partners</note>
    </ligand>
</feature>
<keyword id="KW-0028">Amino-acid biosynthesis</keyword>
<keyword id="KW-0963">Cytoplasm</keyword>
<keyword id="KW-0368">Histidine biosynthesis</keyword>
<keyword id="KW-0378">Hydrolase</keyword>
<keyword id="KW-0460">Magnesium</keyword>
<keyword id="KW-0479">Metal-binding</keyword>
<keyword id="KW-0862">Zinc</keyword>
<proteinExistence type="inferred from homology"/>
<accession>Q63DW7</accession>
<name>HIS3_BACCZ</name>
<sequence>MKPNFSKGLLPAVVIEEGTKEVLMLAYMNEEAYEKTLKTKRTWFYSRSRRSLWNKGETSGHVQHVQSLYLDCDQDAIVVVVKQVGPACHTGEKTCFHYKII</sequence>
<organism>
    <name type="scientific">Bacillus cereus (strain ZK / E33L)</name>
    <dbReference type="NCBI Taxonomy" id="288681"/>
    <lineage>
        <taxon>Bacteria</taxon>
        <taxon>Bacillati</taxon>
        <taxon>Bacillota</taxon>
        <taxon>Bacilli</taxon>
        <taxon>Bacillales</taxon>
        <taxon>Bacillaceae</taxon>
        <taxon>Bacillus</taxon>
        <taxon>Bacillus cereus group</taxon>
    </lineage>
</organism>
<dbReference type="EC" id="3.5.4.19" evidence="1"/>
<dbReference type="EMBL" id="CP000001">
    <property type="protein sequence ID" value="AAU18951.1"/>
    <property type="molecule type" value="Genomic_DNA"/>
</dbReference>
<dbReference type="RefSeq" id="WP_000803979.1">
    <property type="nucleotide sequence ID" value="NZ_CP009968.1"/>
</dbReference>
<dbReference type="SMR" id="Q63DW7"/>
<dbReference type="KEGG" id="bcz:BCE33L1296"/>
<dbReference type="PATRIC" id="fig|288681.22.peg.4258"/>
<dbReference type="UniPathway" id="UPA00031">
    <property type="reaction ID" value="UER00008"/>
</dbReference>
<dbReference type="Proteomes" id="UP000002612">
    <property type="component" value="Chromosome"/>
</dbReference>
<dbReference type="GO" id="GO:0005737">
    <property type="term" value="C:cytoplasm"/>
    <property type="evidence" value="ECO:0007669"/>
    <property type="project" value="UniProtKB-SubCell"/>
</dbReference>
<dbReference type="GO" id="GO:0000287">
    <property type="term" value="F:magnesium ion binding"/>
    <property type="evidence" value="ECO:0007669"/>
    <property type="project" value="UniProtKB-UniRule"/>
</dbReference>
<dbReference type="GO" id="GO:0004635">
    <property type="term" value="F:phosphoribosyl-AMP cyclohydrolase activity"/>
    <property type="evidence" value="ECO:0007669"/>
    <property type="project" value="UniProtKB-UniRule"/>
</dbReference>
<dbReference type="GO" id="GO:0008270">
    <property type="term" value="F:zinc ion binding"/>
    <property type="evidence" value="ECO:0007669"/>
    <property type="project" value="UniProtKB-UniRule"/>
</dbReference>
<dbReference type="GO" id="GO:0000105">
    <property type="term" value="P:L-histidine biosynthetic process"/>
    <property type="evidence" value="ECO:0007669"/>
    <property type="project" value="UniProtKB-UniRule"/>
</dbReference>
<dbReference type="FunFam" id="3.10.20.810:FF:000001">
    <property type="entry name" value="Histidine biosynthesis bifunctional protein HisIE"/>
    <property type="match status" value="1"/>
</dbReference>
<dbReference type="Gene3D" id="3.10.20.810">
    <property type="entry name" value="Phosphoribosyl-AMP cyclohydrolase"/>
    <property type="match status" value="1"/>
</dbReference>
<dbReference type="HAMAP" id="MF_01021">
    <property type="entry name" value="HisI"/>
    <property type="match status" value="1"/>
</dbReference>
<dbReference type="InterPro" id="IPR026660">
    <property type="entry name" value="PRA-CH"/>
</dbReference>
<dbReference type="InterPro" id="IPR002496">
    <property type="entry name" value="PRib_AMP_CycHydrolase_dom"/>
</dbReference>
<dbReference type="InterPro" id="IPR038019">
    <property type="entry name" value="PRib_AMP_CycHydrolase_sf"/>
</dbReference>
<dbReference type="NCBIfam" id="NF000768">
    <property type="entry name" value="PRK00051.1"/>
    <property type="match status" value="1"/>
</dbReference>
<dbReference type="PANTHER" id="PTHR42945">
    <property type="entry name" value="HISTIDINE BIOSYNTHESIS BIFUNCTIONAL PROTEIN"/>
    <property type="match status" value="1"/>
</dbReference>
<dbReference type="PANTHER" id="PTHR42945:SF1">
    <property type="entry name" value="HISTIDINE BIOSYNTHESIS BIFUNCTIONAL PROTEIN HIS7"/>
    <property type="match status" value="1"/>
</dbReference>
<dbReference type="Pfam" id="PF01502">
    <property type="entry name" value="PRA-CH"/>
    <property type="match status" value="1"/>
</dbReference>
<dbReference type="SUPFAM" id="SSF141734">
    <property type="entry name" value="HisI-like"/>
    <property type="match status" value="1"/>
</dbReference>